<dbReference type="EMBL" id="CR380955">
    <property type="protein sequence ID" value="CAG60210.1"/>
    <property type="molecule type" value="Genomic_DNA"/>
</dbReference>
<dbReference type="RefSeq" id="XP_447273.1">
    <property type="nucleotide sequence ID" value="XM_447273.1"/>
</dbReference>
<dbReference type="SMR" id="Q6FR71"/>
<dbReference type="FunCoup" id="Q6FR71">
    <property type="interactions" value="32"/>
</dbReference>
<dbReference type="STRING" id="284593.Q6FR71"/>
<dbReference type="EnsemblFungi" id="CAGL0I00462g-T">
    <property type="protein sequence ID" value="CAGL0I00462g-T-p1"/>
    <property type="gene ID" value="CAGL0I00462g"/>
</dbReference>
<dbReference type="KEGG" id="cgr:2889317"/>
<dbReference type="CGD" id="CAL0129598">
    <property type="gene designation" value="CAGL0I00462g"/>
</dbReference>
<dbReference type="VEuPathDB" id="FungiDB:B1J91_I00462g"/>
<dbReference type="VEuPathDB" id="FungiDB:CAGL0I00462g"/>
<dbReference type="eggNOG" id="ENOG502QTYD">
    <property type="taxonomic scope" value="Eukaryota"/>
</dbReference>
<dbReference type="HOGENOM" id="CLU_097607_0_0_1"/>
<dbReference type="InParanoid" id="Q6FR71"/>
<dbReference type="OMA" id="GEVNTTW"/>
<dbReference type="Proteomes" id="UP000002428">
    <property type="component" value="Chromosome I"/>
</dbReference>
<dbReference type="GO" id="GO:0005789">
    <property type="term" value="C:endoplasmic reticulum membrane"/>
    <property type="evidence" value="ECO:0007669"/>
    <property type="project" value="EnsemblFungi"/>
</dbReference>
<dbReference type="GO" id="GO:0062040">
    <property type="term" value="C:fungal biofilm matrix"/>
    <property type="evidence" value="ECO:0000314"/>
    <property type="project" value="CGD"/>
</dbReference>
<dbReference type="GO" id="GO:0005634">
    <property type="term" value="C:nucleus"/>
    <property type="evidence" value="ECO:0007669"/>
    <property type="project" value="UniProtKB-SubCell"/>
</dbReference>
<dbReference type="GO" id="GO:0006612">
    <property type="term" value="P:protein targeting to membrane"/>
    <property type="evidence" value="ECO:0007669"/>
    <property type="project" value="EnsemblFungi"/>
</dbReference>
<dbReference type="CDD" id="cd11693">
    <property type="entry name" value="HRI1_C_like"/>
    <property type="match status" value="1"/>
</dbReference>
<dbReference type="CDD" id="cd11692">
    <property type="entry name" value="HRI1_N_like"/>
    <property type="match status" value="1"/>
</dbReference>
<dbReference type="Gene3D" id="2.40.128.310">
    <property type="entry name" value="Protein HRI1, C-terminal domain"/>
    <property type="match status" value="1"/>
</dbReference>
<dbReference type="Gene3D" id="2.40.128.320">
    <property type="entry name" value="Protein HRI1, N-terminal domain"/>
    <property type="match status" value="1"/>
</dbReference>
<dbReference type="InterPro" id="IPR031818">
    <property type="entry name" value="Hri1"/>
</dbReference>
<dbReference type="InterPro" id="IPR038744">
    <property type="entry name" value="Hri1_N"/>
</dbReference>
<dbReference type="InterPro" id="IPR043047">
    <property type="entry name" value="Hri1_N_sf"/>
</dbReference>
<dbReference type="Pfam" id="PF16815">
    <property type="entry name" value="HRI1"/>
    <property type="match status" value="1"/>
</dbReference>
<sequence length="249" mass="27917">MSAVLFKRLVFQVGDSANERTFTLSSVSKNGHFISLRPFTKPTEDEKKFPLEWVFAGTNDRVKVTPTTNADGKPVLQQDFDMGFDTNVYLNVENTHRGVINTFWQNWESGCVEETGKVFPFGNDKEGIPFMELWQPIDPNSKDLVILDAGDGRKIDGPVRSTVLKVVDGQDFEGLMIIVGEWAQGYLADKNKSSVDGLSFVRYHVSNEKLSSGLFEYGSQLSKFPTDFSNVKEGSLLTIDGLKWEVIEN</sequence>
<name>HRI1_CANGA</name>
<gene>
    <name type="primary">HRI1</name>
    <name type="ordered locus">CAGL0I00462g</name>
</gene>
<reference key="1">
    <citation type="journal article" date="2004" name="Nature">
        <title>Genome evolution in yeasts.</title>
        <authorList>
            <person name="Dujon B."/>
            <person name="Sherman D."/>
            <person name="Fischer G."/>
            <person name="Durrens P."/>
            <person name="Casaregola S."/>
            <person name="Lafontaine I."/>
            <person name="de Montigny J."/>
            <person name="Marck C."/>
            <person name="Neuveglise C."/>
            <person name="Talla E."/>
            <person name="Goffard N."/>
            <person name="Frangeul L."/>
            <person name="Aigle M."/>
            <person name="Anthouard V."/>
            <person name="Babour A."/>
            <person name="Barbe V."/>
            <person name="Barnay S."/>
            <person name="Blanchin S."/>
            <person name="Beckerich J.-M."/>
            <person name="Beyne E."/>
            <person name="Bleykasten C."/>
            <person name="Boisrame A."/>
            <person name="Boyer J."/>
            <person name="Cattolico L."/>
            <person name="Confanioleri F."/>
            <person name="de Daruvar A."/>
            <person name="Despons L."/>
            <person name="Fabre E."/>
            <person name="Fairhead C."/>
            <person name="Ferry-Dumazet H."/>
            <person name="Groppi A."/>
            <person name="Hantraye F."/>
            <person name="Hennequin C."/>
            <person name="Jauniaux N."/>
            <person name="Joyet P."/>
            <person name="Kachouri R."/>
            <person name="Kerrest A."/>
            <person name="Koszul R."/>
            <person name="Lemaire M."/>
            <person name="Lesur I."/>
            <person name="Ma L."/>
            <person name="Muller H."/>
            <person name="Nicaud J.-M."/>
            <person name="Nikolski M."/>
            <person name="Oztas S."/>
            <person name="Ozier-Kalogeropoulos O."/>
            <person name="Pellenz S."/>
            <person name="Potier S."/>
            <person name="Richard G.-F."/>
            <person name="Straub M.-L."/>
            <person name="Suleau A."/>
            <person name="Swennen D."/>
            <person name="Tekaia F."/>
            <person name="Wesolowski-Louvel M."/>
            <person name="Westhof E."/>
            <person name="Wirth B."/>
            <person name="Zeniou-Meyer M."/>
            <person name="Zivanovic Y."/>
            <person name="Bolotin-Fukuhara M."/>
            <person name="Thierry A."/>
            <person name="Bouchier C."/>
            <person name="Caudron B."/>
            <person name="Scarpelli C."/>
            <person name="Gaillardin C."/>
            <person name="Weissenbach J."/>
            <person name="Wincker P."/>
            <person name="Souciet J.-L."/>
        </authorList>
    </citation>
    <scope>NUCLEOTIDE SEQUENCE [LARGE SCALE GENOMIC DNA]</scope>
    <source>
        <strain>ATCC 2001 / BCRC 20586 / JCM 3761 / NBRC 0622 / NRRL Y-65 / CBS 138</strain>
    </source>
</reference>
<keyword id="KW-0963">Cytoplasm</keyword>
<keyword id="KW-0539">Nucleus</keyword>
<keyword id="KW-1185">Reference proteome</keyword>
<evidence type="ECO:0000250" key="1"/>
<evidence type="ECO:0000305" key="2"/>
<proteinExistence type="inferred from homology"/>
<feature type="chain" id="PRO_0000410809" description="Protein HRI1">
    <location>
        <begin position="1"/>
        <end position="249"/>
    </location>
</feature>
<protein>
    <recommendedName>
        <fullName>Protein HRI1</fullName>
    </recommendedName>
</protein>
<organism>
    <name type="scientific">Candida glabrata (strain ATCC 2001 / BCRC 20586 / JCM 3761 / NBRC 0622 / NRRL Y-65 / CBS 138)</name>
    <name type="common">Yeast</name>
    <name type="synonym">Nakaseomyces glabratus</name>
    <dbReference type="NCBI Taxonomy" id="284593"/>
    <lineage>
        <taxon>Eukaryota</taxon>
        <taxon>Fungi</taxon>
        <taxon>Dikarya</taxon>
        <taxon>Ascomycota</taxon>
        <taxon>Saccharomycotina</taxon>
        <taxon>Saccharomycetes</taxon>
        <taxon>Saccharomycetales</taxon>
        <taxon>Saccharomycetaceae</taxon>
        <taxon>Nakaseomyces</taxon>
    </lineage>
</organism>
<comment type="subcellular location">
    <subcellularLocation>
        <location evidence="1">Cytoplasm</location>
    </subcellularLocation>
    <subcellularLocation>
        <location evidence="1">Nucleus</location>
    </subcellularLocation>
</comment>
<comment type="similarity">
    <text evidence="2">Belongs to the HRI1 family.</text>
</comment>
<accession>Q6FR71</accession>